<reference key="1">
    <citation type="journal article" date="2012" name="BMC Genomics">
        <title>Comparative genomics and transcriptomics of lineages I, II, and III strains of Listeria monocytogenes.</title>
        <authorList>
            <person name="Hain T."/>
            <person name="Ghai R."/>
            <person name="Billion A."/>
            <person name="Kuenne C.T."/>
            <person name="Steinweg C."/>
            <person name="Izar B."/>
            <person name="Mohamed W."/>
            <person name="Mraheil M."/>
            <person name="Domann E."/>
            <person name="Schaffrath S."/>
            <person name="Karst U."/>
            <person name="Goesmann A."/>
            <person name="Oehm S."/>
            <person name="Puhler A."/>
            <person name="Merkl R."/>
            <person name="Vorwerk S."/>
            <person name="Glaser P."/>
            <person name="Garrido P."/>
            <person name="Rusniok C."/>
            <person name="Buchrieser C."/>
            <person name="Goebel W."/>
            <person name="Chakraborty T."/>
        </authorList>
    </citation>
    <scope>NUCLEOTIDE SEQUENCE [LARGE SCALE GENOMIC DNA]</scope>
    <source>
        <strain>CLIP80459</strain>
    </source>
</reference>
<comment type="function">
    <text evidence="1">Catalyzes the phosphorylation of the position 2 hydroxy group of 4-diphosphocytidyl-2C-methyl-D-erythritol.</text>
</comment>
<comment type="catalytic activity">
    <reaction evidence="1">
        <text>4-CDP-2-C-methyl-D-erythritol + ATP = 4-CDP-2-C-methyl-D-erythritol 2-phosphate + ADP + H(+)</text>
        <dbReference type="Rhea" id="RHEA:18437"/>
        <dbReference type="ChEBI" id="CHEBI:15378"/>
        <dbReference type="ChEBI" id="CHEBI:30616"/>
        <dbReference type="ChEBI" id="CHEBI:57823"/>
        <dbReference type="ChEBI" id="CHEBI:57919"/>
        <dbReference type="ChEBI" id="CHEBI:456216"/>
        <dbReference type="EC" id="2.7.1.148"/>
    </reaction>
</comment>
<comment type="pathway">
    <text evidence="1">Isoprenoid biosynthesis; isopentenyl diphosphate biosynthesis via DXP pathway; isopentenyl diphosphate from 1-deoxy-D-xylulose 5-phosphate: step 3/6.</text>
</comment>
<comment type="similarity">
    <text evidence="1">Belongs to the GHMP kinase family. IspE subfamily.</text>
</comment>
<accession>C1KYC3</accession>
<organism>
    <name type="scientific">Listeria monocytogenes serotype 4b (strain CLIP80459)</name>
    <dbReference type="NCBI Taxonomy" id="568819"/>
    <lineage>
        <taxon>Bacteria</taxon>
        <taxon>Bacillati</taxon>
        <taxon>Bacillota</taxon>
        <taxon>Bacilli</taxon>
        <taxon>Bacillales</taxon>
        <taxon>Listeriaceae</taxon>
        <taxon>Listeria</taxon>
    </lineage>
</organism>
<evidence type="ECO:0000255" key="1">
    <source>
        <dbReference type="HAMAP-Rule" id="MF_00061"/>
    </source>
</evidence>
<keyword id="KW-0067">ATP-binding</keyword>
<keyword id="KW-0414">Isoprene biosynthesis</keyword>
<keyword id="KW-0418">Kinase</keyword>
<keyword id="KW-0547">Nucleotide-binding</keyword>
<keyword id="KW-0808">Transferase</keyword>
<dbReference type="EC" id="2.7.1.148" evidence="1"/>
<dbReference type="EMBL" id="FM242711">
    <property type="protein sequence ID" value="CAS03978.1"/>
    <property type="molecule type" value="Genomic_DNA"/>
</dbReference>
<dbReference type="RefSeq" id="WP_003725506.1">
    <property type="nucleotide sequence ID" value="NC_012488.1"/>
</dbReference>
<dbReference type="SMR" id="C1KYC3"/>
<dbReference type="KEGG" id="lmc:Lm4b_00187"/>
<dbReference type="HOGENOM" id="CLU_053057_1_1_9"/>
<dbReference type="UniPathway" id="UPA00056">
    <property type="reaction ID" value="UER00094"/>
</dbReference>
<dbReference type="GO" id="GO:0050515">
    <property type="term" value="F:4-(cytidine 5'-diphospho)-2-C-methyl-D-erythritol kinase activity"/>
    <property type="evidence" value="ECO:0007669"/>
    <property type="project" value="UniProtKB-UniRule"/>
</dbReference>
<dbReference type="GO" id="GO:0005524">
    <property type="term" value="F:ATP binding"/>
    <property type="evidence" value="ECO:0007669"/>
    <property type="project" value="UniProtKB-UniRule"/>
</dbReference>
<dbReference type="GO" id="GO:0019288">
    <property type="term" value="P:isopentenyl diphosphate biosynthetic process, methylerythritol 4-phosphate pathway"/>
    <property type="evidence" value="ECO:0007669"/>
    <property type="project" value="UniProtKB-UniRule"/>
</dbReference>
<dbReference type="GO" id="GO:0016114">
    <property type="term" value="P:terpenoid biosynthetic process"/>
    <property type="evidence" value="ECO:0007669"/>
    <property type="project" value="InterPro"/>
</dbReference>
<dbReference type="FunFam" id="3.30.230.10:FF:000029">
    <property type="entry name" value="4-diphosphocytidyl-2-C-methyl-D-erythritol kinase"/>
    <property type="match status" value="1"/>
</dbReference>
<dbReference type="FunFam" id="3.30.70.890:FF:000006">
    <property type="entry name" value="4-diphosphocytidyl-2-C-methyl-D-erythritol kinase"/>
    <property type="match status" value="1"/>
</dbReference>
<dbReference type="Gene3D" id="3.30.230.10">
    <property type="match status" value="1"/>
</dbReference>
<dbReference type="Gene3D" id="3.30.70.890">
    <property type="entry name" value="GHMP kinase, C-terminal domain"/>
    <property type="match status" value="1"/>
</dbReference>
<dbReference type="HAMAP" id="MF_00061">
    <property type="entry name" value="IspE"/>
    <property type="match status" value="1"/>
</dbReference>
<dbReference type="InterPro" id="IPR013750">
    <property type="entry name" value="GHMP_kinase_C_dom"/>
</dbReference>
<dbReference type="InterPro" id="IPR036554">
    <property type="entry name" value="GHMP_kinase_C_sf"/>
</dbReference>
<dbReference type="InterPro" id="IPR006204">
    <property type="entry name" value="GHMP_kinase_N_dom"/>
</dbReference>
<dbReference type="InterPro" id="IPR004424">
    <property type="entry name" value="IspE"/>
</dbReference>
<dbReference type="InterPro" id="IPR020568">
    <property type="entry name" value="Ribosomal_Su5_D2-typ_SF"/>
</dbReference>
<dbReference type="InterPro" id="IPR014721">
    <property type="entry name" value="Ribsml_uS5_D2-typ_fold_subgr"/>
</dbReference>
<dbReference type="NCBIfam" id="TIGR00154">
    <property type="entry name" value="ispE"/>
    <property type="match status" value="1"/>
</dbReference>
<dbReference type="NCBIfam" id="NF011202">
    <property type="entry name" value="PRK14608.1"/>
    <property type="match status" value="1"/>
</dbReference>
<dbReference type="PANTHER" id="PTHR43527">
    <property type="entry name" value="4-DIPHOSPHOCYTIDYL-2-C-METHYL-D-ERYTHRITOL KINASE, CHLOROPLASTIC"/>
    <property type="match status" value="1"/>
</dbReference>
<dbReference type="PANTHER" id="PTHR43527:SF2">
    <property type="entry name" value="4-DIPHOSPHOCYTIDYL-2-C-METHYL-D-ERYTHRITOL KINASE, CHLOROPLASTIC"/>
    <property type="match status" value="1"/>
</dbReference>
<dbReference type="Pfam" id="PF08544">
    <property type="entry name" value="GHMP_kinases_C"/>
    <property type="match status" value="1"/>
</dbReference>
<dbReference type="Pfam" id="PF00288">
    <property type="entry name" value="GHMP_kinases_N"/>
    <property type="match status" value="1"/>
</dbReference>
<dbReference type="PIRSF" id="PIRSF010376">
    <property type="entry name" value="IspE"/>
    <property type="match status" value="1"/>
</dbReference>
<dbReference type="SUPFAM" id="SSF55060">
    <property type="entry name" value="GHMP Kinase, C-terminal domain"/>
    <property type="match status" value="1"/>
</dbReference>
<dbReference type="SUPFAM" id="SSF54211">
    <property type="entry name" value="Ribosomal protein S5 domain 2-like"/>
    <property type="match status" value="1"/>
</dbReference>
<proteinExistence type="inferred from homology"/>
<gene>
    <name evidence="1" type="primary">ispE</name>
    <name type="ordered locus">Lm4b_00187</name>
</gene>
<name>ISPE_LISMC</name>
<sequence>MKISITAPAKINLSLDALYKREDGYHEVEMVMTTIDLADRLYLERLDEDKIVLDVKAHFIPEDRRNLIYQAALLLKKRFDVKMGVRITIDKHIPVSAGLAGGSSDAAAALKGLNVIWELGLSIEELAEISSEIGSDIAFCVYGGTALATGRGEKISALPNIPGCWIVLAKPSISVSTPTIYKELQVDNVEHPDTQKMIESIKNGDLDGIFASTGNVLESVTLEKNPQVKRIKDRMLAFGAEAALMSGSGPTVFALIKQYSRAKRVYNGLRGFCEEVYMVRPWSEGENDTNINN</sequence>
<feature type="chain" id="PRO_1000202383" description="4-diphosphocytidyl-2-C-methyl-D-erythritol kinase">
    <location>
        <begin position="1"/>
        <end position="293"/>
    </location>
</feature>
<feature type="active site" evidence="1">
    <location>
        <position position="10"/>
    </location>
</feature>
<feature type="active site" evidence="1">
    <location>
        <position position="136"/>
    </location>
</feature>
<feature type="binding site" evidence="1">
    <location>
        <begin position="94"/>
        <end position="104"/>
    </location>
    <ligand>
        <name>ATP</name>
        <dbReference type="ChEBI" id="CHEBI:30616"/>
    </ligand>
</feature>
<protein>
    <recommendedName>
        <fullName evidence="1">4-diphosphocytidyl-2-C-methyl-D-erythritol kinase</fullName>
        <shortName evidence="1">CMK</shortName>
        <ecNumber evidence="1">2.7.1.148</ecNumber>
    </recommendedName>
    <alternativeName>
        <fullName evidence="1">4-(cytidine-5'-diphospho)-2-C-methyl-D-erythritol kinase</fullName>
    </alternativeName>
</protein>